<comment type="similarity">
    <text evidence="1">Belongs to the poxviruses Kelch family.</text>
</comment>
<keyword id="KW-0880">Kelch repeat</keyword>
<keyword id="KW-1185">Reference proteome</keyword>
<keyword id="KW-0677">Repeat</keyword>
<accession>Q76ZL3</accession>
<accession>P21006</accession>
<reference key="1">
    <citation type="journal article" date="1991" name="J. Gen. Virol.">
        <title>Nucleotide sequence of 42 kbp of vaccinia virus strain WR from near the right inverted terminal repeat.</title>
        <authorList>
            <person name="Smith G.L."/>
            <person name="Chan Y.S."/>
            <person name="Howard S.T."/>
        </authorList>
    </citation>
    <scope>NUCLEOTIDE SEQUENCE [GENOMIC DNA]</scope>
</reference>
<reference key="2">
    <citation type="journal article" date="1991" name="Virology">
        <title>Vaccinia virus homologues of the Shope fibroma virus inverted terminal repeat proteins and a discontinuous ORF related to the tumor necrosis factor receptor family.</title>
        <authorList>
            <person name="Howard S.T."/>
            <person name="Chan Y.S."/>
            <person name="Smith G.L."/>
        </authorList>
    </citation>
    <scope>NUCLEOTIDE SEQUENCE [GENOMIC DNA]</scope>
</reference>
<reference key="3">
    <citation type="submission" date="2003-02" db="EMBL/GenBank/DDBJ databases">
        <title>Sequencing of the coding region of Vaccinia-WR to an average 9-fold redundancy and an error rate of 0.16/10kb.</title>
        <authorList>
            <person name="Esposito J.J."/>
            <person name="Frace A.M."/>
            <person name="Sammons S.A."/>
            <person name="Olsen-Rasmussen M."/>
            <person name="Osborne J."/>
            <person name="Wohlhueter R."/>
        </authorList>
    </citation>
    <scope>NUCLEOTIDE SEQUENCE [LARGE SCALE GENOMIC DNA]</scope>
</reference>
<evidence type="ECO:0000305" key="1"/>
<protein>
    <recommendedName>
        <fullName>Kelch repeat protein B10</fullName>
    </recommendedName>
</protein>
<dbReference type="EMBL" id="D11079">
    <property type="protein sequence ID" value="BAA01840.1"/>
    <property type="molecule type" value="Genomic_DNA"/>
</dbReference>
<dbReference type="EMBL" id="M58056">
    <property type="protein sequence ID" value="AAA47969.1"/>
    <property type="molecule type" value="Genomic_DNA"/>
</dbReference>
<dbReference type="EMBL" id="AY243312">
    <property type="protein sequence ID" value="AAO89471.1"/>
    <property type="molecule type" value="Genomic_DNA"/>
</dbReference>
<dbReference type="PIR" id="JQ1804">
    <property type="entry name" value="JQ1804"/>
</dbReference>
<dbReference type="RefSeq" id="YP_233074.1">
    <property type="nucleotide sequence ID" value="NC_006998.1"/>
</dbReference>
<dbReference type="SMR" id="Q76ZL3"/>
<dbReference type="DNASU" id="3707663"/>
<dbReference type="GeneID" id="3707663"/>
<dbReference type="KEGG" id="vg:3707663"/>
<dbReference type="Proteomes" id="UP000000344">
    <property type="component" value="Genome"/>
</dbReference>
<dbReference type="Gene3D" id="2.120.10.80">
    <property type="entry name" value="Kelch-type beta propeller"/>
    <property type="match status" value="1"/>
</dbReference>
<dbReference type="InterPro" id="IPR015915">
    <property type="entry name" value="Kelch-typ_b-propeller"/>
</dbReference>
<dbReference type="PANTHER" id="PTHR24412:SF163">
    <property type="entry name" value="CALICIN"/>
    <property type="match status" value="1"/>
</dbReference>
<dbReference type="PANTHER" id="PTHR24412">
    <property type="entry name" value="KELCH PROTEIN"/>
    <property type="match status" value="1"/>
</dbReference>
<dbReference type="SUPFAM" id="SSF117281">
    <property type="entry name" value="Kelch motif"/>
    <property type="match status" value="1"/>
</dbReference>
<organism>
    <name type="scientific">Vaccinia virus (strain Western Reserve)</name>
    <name type="common">VACV</name>
    <name type="synonym">Vaccinia virus (strain WR)</name>
    <dbReference type="NCBI Taxonomy" id="10254"/>
    <lineage>
        <taxon>Viruses</taxon>
        <taxon>Varidnaviria</taxon>
        <taxon>Bamfordvirae</taxon>
        <taxon>Nucleocytoviricota</taxon>
        <taxon>Pokkesviricetes</taxon>
        <taxon>Chitovirales</taxon>
        <taxon>Poxviridae</taxon>
        <taxon>Chordopoxvirinae</taxon>
        <taxon>Orthopoxvirus</taxon>
        <taxon>Vaccinia virus</taxon>
    </lineage>
</organism>
<name>B10_VACCW</name>
<sequence>MDSGIYETPINYKKSNVSAVSVNNTIFVTGGLFINNSNSTIVVNNMEKLDIYKDKQWSIIEMPMARVYHGIDSTFGMLYFAGGLSVTEQYGNLEKNNEISCYNPRTNKWFDISYTIYKISISSLCKLNNVFYVFSKDIGYVEKYDGAWKLVHDRLPAIKALSTSPY</sequence>
<proteinExistence type="inferred from homology"/>
<feature type="chain" id="PRO_0000119155" description="Kelch repeat protein B10">
    <location>
        <begin position="1"/>
        <end position="166"/>
    </location>
</feature>
<feature type="repeat" description="Kelch 1">
    <location>
        <begin position="25"/>
        <end position="76"/>
    </location>
</feature>
<feature type="repeat" description="Kelch 2">
    <location>
        <begin position="77"/>
        <end position="129"/>
    </location>
</feature>
<gene>
    <name type="ordered locus">VACWR192</name>
    <name type="ORF">B10R</name>
</gene>
<organismHost>
    <name type="scientific">Bos taurus</name>
    <name type="common">Bovine</name>
    <dbReference type="NCBI Taxonomy" id="9913"/>
</organismHost>